<reference key="1">
    <citation type="journal article" date="2011" name="J. Bacteriol.">
        <title>Comparative genomics of 28 Salmonella enterica isolates: evidence for CRISPR-mediated adaptive sublineage evolution.</title>
        <authorList>
            <person name="Fricke W.F."/>
            <person name="Mammel M.K."/>
            <person name="McDermott P.F."/>
            <person name="Tartera C."/>
            <person name="White D.G."/>
            <person name="Leclerc J.E."/>
            <person name="Ravel J."/>
            <person name="Cebula T.A."/>
        </authorList>
    </citation>
    <scope>NUCLEOTIDE SEQUENCE [LARGE SCALE GENOMIC DNA]</scope>
    <source>
        <strain>SL476</strain>
    </source>
</reference>
<sequence length="133" mass="15164">MAKEFGRPQRVAQEMQKEIAIILQREIKDPRLGMMTTVSGVEMSRDLAYAKVFVTFLNDQDEAAVKNGIKALQEASGFIRSLLGKAMRLRIVPELTFFYDNSLVEGMRMSNLVTNVVKHDEERRVNPDDSKED</sequence>
<keyword id="KW-0963">Cytoplasm</keyword>
<keyword id="KW-0690">Ribosome biogenesis</keyword>
<dbReference type="EMBL" id="CP001120">
    <property type="protein sequence ID" value="ACF67012.1"/>
    <property type="molecule type" value="Genomic_DNA"/>
</dbReference>
<dbReference type="RefSeq" id="WP_001040200.1">
    <property type="nucleotide sequence ID" value="NC_011083.1"/>
</dbReference>
<dbReference type="SMR" id="B4TJ05"/>
<dbReference type="KEGG" id="seh:SeHA_C3580"/>
<dbReference type="HOGENOM" id="CLU_089475_5_0_6"/>
<dbReference type="Proteomes" id="UP000001866">
    <property type="component" value="Chromosome"/>
</dbReference>
<dbReference type="GO" id="GO:0005829">
    <property type="term" value="C:cytosol"/>
    <property type="evidence" value="ECO:0007669"/>
    <property type="project" value="TreeGrafter"/>
</dbReference>
<dbReference type="GO" id="GO:0043024">
    <property type="term" value="F:ribosomal small subunit binding"/>
    <property type="evidence" value="ECO:0007669"/>
    <property type="project" value="TreeGrafter"/>
</dbReference>
<dbReference type="GO" id="GO:0030490">
    <property type="term" value="P:maturation of SSU-rRNA"/>
    <property type="evidence" value="ECO:0007669"/>
    <property type="project" value="UniProtKB-UniRule"/>
</dbReference>
<dbReference type="FunFam" id="3.30.300.20:FF:000007">
    <property type="entry name" value="Ribosome-binding factor A"/>
    <property type="match status" value="1"/>
</dbReference>
<dbReference type="Gene3D" id="3.30.300.20">
    <property type="match status" value="1"/>
</dbReference>
<dbReference type="HAMAP" id="MF_00003">
    <property type="entry name" value="RbfA"/>
    <property type="match status" value="1"/>
</dbReference>
<dbReference type="InterPro" id="IPR015946">
    <property type="entry name" value="KH_dom-like_a/b"/>
</dbReference>
<dbReference type="InterPro" id="IPR000238">
    <property type="entry name" value="RbfA"/>
</dbReference>
<dbReference type="InterPro" id="IPR023799">
    <property type="entry name" value="RbfA_dom_sf"/>
</dbReference>
<dbReference type="InterPro" id="IPR020053">
    <property type="entry name" value="Ribosome-bd_factorA_CS"/>
</dbReference>
<dbReference type="NCBIfam" id="TIGR00082">
    <property type="entry name" value="rbfA"/>
    <property type="match status" value="1"/>
</dbReference>
<dbReference type="PANTHER" id="PTHR33515">
    <property type="entry name" value="RIBOSOME-BINDING FACTOR A, CHLOROPLASTIC-RELATED"/>
    <property type="match status" value="1"/>
</dbReference>
<dbReference type="PANTHER" id="PTHR33515:SF1">
    <property type="entry name" value="RIBOSOME-BINDING FACTOR A, CHLOROPLASTIC-RELATED"/>
    <property type="match status" value="1"/>
</dbReference>
<dbReference type="Pfam" id="PF02033">
    <property type="entry name" value="RBFA"/>
    <property type="match status" value="1"/>
</dbReference>
<dbReference type="SUPFAM" id="SSF89919">
    <property type="entry name" value="Ribosome-binding factor A, RbfA"/>
    <property type="match status" value="1"/>
</dbReference>
<dbReference type="PROSITE" id="PS01319">
    <property type="entry name" value="RBFA"/>
    <property type="match status" value="1"/>
</dbReference>
<protein>
    <recommendedName>
        <fullName evidence="1">Ribosome-binding factor A</fullName>
    </recommendedName>
</protein>
<accession>B4TJ05</accession>
<gene>
    <name evidence="1" type="primary">rbfA</name>
    <name type="ordered locus">SeHA_C3580</name>
</gene>
<comment type="function">
    <text evidence="1">One of several proteins that assist in the late maturation steps of the functional core of the 30S ribosomal subunit. Associates with free 30S ribosomal subunits (but not with 30S subunits that are part of 70S ribosomes or polysomes). Required for efficient processing of 16S rRNA. May interact with the 5'-terminal helix region of 16S rRNA.</text>
</comment>
<comment type="subunit">
    <text evidence="1">Monomer. Binds 30S ribosomal subunits, but not 50S ribosomal subunits or 70S ribosomes.</text>
</comment>
<comment type="subcellular location">
    <subcellularLocation>
        <location evidence="1">Cytoplasm</location>
    </subcellularLocation>
</comment>
<comment type="similarity">
    <text evidence="1">Belongs to the RbfA family.</text>
</comment>
<evidence type="ECO:0000255" key="1">
    <source>
        <dbReference type="HAMAP-Rule" id="MF_00003"/>
    </source>
</evidence>
<name>RBFA_SALHS</name>
<feature type="chain" id="PRO_1000088927" description="Ribosome-binding factor A">
    <location>
        <begin position="1"/>
        <end position="133"/>
    </location>
</feature>
<proteinExistence type="inferred from homology"/>
<organism>
    <name type="scientific">Salmonella heidelberg (strain SL476)</name>
    <dbReference type="NCBI Taxonomy" id="454169"/>
    <lineage>
        <taxon>Bacteria</taxon>
        <taxon>Pseudomonadati</taxon>
        <taxon>Pseudomonadota</taxon>
        <taxon>Gammaproteobacteria</taxon>
        <taxon>Enterobacterales</taxon>
        <taxon>Enterobacteriaceae</taxon>
        <taxon>Salmonella</taxon>
    </lineage>
</organism>